<evidence type="ECO:0000255" key="1">
    <source>
        <dbReference type="HAMAP-Rule" id="MF_03175"/>
    </source>
</evidence>
<evidence type="ECO:0000256" key="2">
    <source>
        <dbReference type="SAM" id="MobiDB-lite"/>
    </source>
</evidence>
<feature type="chain" id="PRO_0000407602" description="Methionine aminopeptidase 2-2">
    <location>
        <begin position="1"/>
        <end position="431"/>
    </location>
</feature>
<feature type="region of interest" description="Disordered" evidence="2">
    <location>
        <begin position="1"/>
        <end position="76"/>
    </location>
</feature>
<feature type="compositionally biased region" description="Acidic residues" evidence="2">
    <location>
        <begin position="35"/>
        <end position="47"/>
    </location>
</feature>
<feature type="binding site" evidence="1">
    <location>
        <position position="184"/>
    </location>
    <ligand>
        <name>substrate</name>
    </ligand>
</feature>
<feature type="binding site" evidence="1">
    <location>
        <position position="204"/>
    </location>
    <ligand>
        <name>a divalent metal cation</name>
        <dbReference type="ChEBI" id="CHEBI:60240"/>
        <label>1</label>
    </ligand>
</feature>
<feature type="binding site" evidence="1">
    <location>
        <position position="215"/>
    </location>
    <ligand>
        <name>a divalent metal cation</name>
        <dbReference type="ChEBI" id="CHEBI:60240"/>
        <label>1</label>
    </ligand>
</feature>
<feature type="binding site" evidence="1">
    <location>
        <position position="215"/>
    </location>
    <ligand>
        <name>a divalent metal cation</name>
        <dbReference type="ChEBI" id="CHEBI:60240"/>
        <label>2</label>
        <note>catalytic</note>
    </ligand>
</feature>
<feature type="binding site" evidence="1">
    <location>
        <position position="284"/>
    </location>
    <ligand>
        <name>a divalent metal cation</name>
        <dbReference type="ChEBI" id="CHEBI:60240"/>
        <label>2</label>
        <note>catalytic</note>
    </ligand>
</feature>
<feature type="binding site" evidence="1">
    <location>
        <position position="292"/>
    </location>
    <ligand>
        <name>substrate</name>
    </ligand>
</feature>
<feature type="binding site" evidence="1">
    <location>
        <position position="317"/>
    </location>
    <ligand>
        <name>a divalent metal cation</name>
        <dbReference type="ChEBI" id="CHEBI:60240"/>
        <label>2</label>
        <note>catalytic</note>
    </ligand>
</feature>
<feature type="binding site" evidence="1">
    <location>
        <position position="412"/>
    </location>
    <ligand>
        <name>a divalent metal cation</name>
        <dbReference type="ChEBI" id="CHEBI:60240"/>
        <label>1</label>
    </ligand>
</feature>
<feature type="binding site" evidence="1">
    <location>
        <position position="412"/>
    </location>
    <ligand>
        <name>a divalent metal cation</name>
        <dbReference type="ChEBI" id="CHEBI:60240"/>
        <label>2</label>
        <note>catalytic</note>
    </ligand>
</feature>
<gene>
    <name type="ORF">An04g01330</name>
</gene>
<sequence>MAAQASEKLQKLDLNGQSGDAEADAPAAGQTQAGEAEDDSDDDEVEDGNAAGEGAASGGGAKVQSSPPRVPLSTLFAGKEYPEGEIVEYQNENSYRTTNEEKRYLDRMKNDFLQEYRQAAEVHRQVRQYAQKTIKPGQTLTEIAEGIEESVRALTGHQGLEEGDNLKGGMGFPCGLSINHCAAHYTPNAGNKMVLQQGDVMKVDFGAHINGRIVDSAFTVAFDPVYDPLLAAVKDATNTGIREAGIDVRMSDIGAAIQEAMESYEVEINGTMYPVKCIRNLNGHNIDQHIIHGGKSVPIVKGGDQTKMEEGEVFAIETFGSTGKGYVREDMETSHYALIPDHSQVPLRLSSAKNLLNVINKNFGTLPFCRRYLDRLGQDKYLLGLNNLVSSGIVQDYPPLCDIKGSYTAQYEHTIVLRPNVKEVISRGDDY</sequence>
<proteinExistence type="inferred from homology"/>
<comment type="function">
    <text evidence="1">Cotranslationally removes the N-terminal methionine from nascent proteins. The N-terminal methionine is often cleaved when the second residue in the primary sequence is small and uncharged (Met-Ala-, Cys, Gly, Pro, Ser, Thr, or Val).</text>
</comment>
<comment type="catalytic activity">
    <reaction evidence="1">
        <text>Release of N-terminal amino acids, preferentially methionine, from peptides and arylamides.</text>
        <dbReference type="EC" id="3.4.11.18"/>
    </reaction>
</comment>
<comment type="cofactor">
    <cofactor evidence="1">
        <name>Co(2+)</name>
        <dbReference type="ChEBI" id="CHEBI:48828"/>
    </cofactor>
    <cofactor evidence="1">
        <name>Zn(2+)</name>
        <dbReference type="ChEBI" id="CHEBI:29105"/>
    </cofactor>
    <cofactor evidence="1">
        <name>Mn(2+)</name>
        <dbReference type="ChEBI" id="CHEBI:29035"/>
    </cofactor>
    <cofactor evidence="1">
        <name>Fe(2+)</name>
        <dbReference type="ChEBI" id="CHEBI:29033"/>
    </cofactor>
    <text evidence="1">Binds 2 divalent metal cations per subunit. Has a high-affinity and a low affinity metal-binding site. The true nature of the physiological cofactor is under debate. The enzyme is active with cobalt, zinc, manganese or divalent iron ions. Most likely, methionine aminopeptidases function as mononuclear Fe(2+)-metalloproteases under physiological conditions, and the catalytically relevant metal-binding site has been assigned to the histidine-containing high-affinity site.</text>
</comment>
<comment type="subcellular location">
    <subcellularLocation>
        <location evidence="1">Cytoplasm</location>
    </subcellularLocation>
</comment>
<comment type="similarity">
    <text evidence="1">Belongs to the peptidase M24A family. Methionine aminopeptidase eukaryotic type 2 subfamily.</text>
</comment>
<reference key="1">
    <citation type="journal article" date="2007" name="Nat. Biotechnol.">
        <title>Genome sequencing and analysis of the versatile cell factory Aspergillus niger CBS 513.88.</title>
        <authorList>
            <person name="Pel H.J."/>
            <person name="de Winde J.H."/>
            <person name="Archer D.B."/>
            <person name="Dyer P.S."/>
            <person name="Hofmann G."/>
            <person name="Schaap P.J."/>
            <person name="Turner G."/>
            <person name="de Vries R.P."/>
            <person name="Albang R."/>
            <person name="Albermann K."/>
            <person name="Andersen M.R."/>
            <person name="Bendtsen J.D."/>
            <person name="Benen J.A.E."/>
            <person name="van den Berg M."/>
            <person name="Breestraat S."/>
            <person name="Caddick M.X."/>
            <person name="Contreras R."/>
            <person name="Cornell M."/>
            <person name="Coutinho P.M."/>
            <person name="Danchin E.G.J."/>
            <person name="Debets A.J.M."/>
            <person name="Dekker P."/>
            <person name="van Dijck P.W.M."/>
            <person name="van Dijk A."/>
            <person name="Dijkhuizen L."/>
            <person name="Driessen A.J.M."/>
            <person name="d'Enfert C."/>
            <person name="Geysens S."/>
            <person name="Goosen C."/>
            <person name="Groot G.S.P."/>
            <person name="de Groot P.W.J."/>
            <person name="Guillemette T."/>
            <person name="Henrissat B."/>
            <person name="Herweijer M."/>
            <person name="van den Hombergh J.P.T.W."/>
            <person name="van den Hondel C.A.M.J.J."/>
            <person name="van der Heijden R.T.J.M."/>
            <person name="van der Kaaij R.M."/>
            <person name="Klis F.M."/>
            <person name="Kools H.J."/>
            <person name="Kubicek C.P."/>
            <person name="van Kuyk P.A."/>
            <person name="Lauber J."/>
            <person name="Lu X."/>
            <person name="van der Maarel M.J.E.C."/>
            <person name="Meulenberg R."/>
            <person name="Menke H."/>
            <person name="Mortimer M.A."/>
            <person name="Nielsen J."/>
            <person name="Oliver S.G."/>
            <person name="Olsthoorn M."/>
            <person name="Pal K."/>
            <person name="van Peij N.N.M.E."/>
            <person name="Ram A.F.J."/>
            <person name="Rinas U."/>
            <person name="Roubos J.A."/>
            <person name="Sagt C.M.J."/>
            <person name="Schmoll M."/>
            <person name="Sun J."/>
            <person name="Ussery D."/>
            <person name="Varga J."/>
            <person name="Vervecken W."/>
            <person name="van de Vondervoort P.J.J."/>
            <person name="Wedler H."/>
            <person name="Woesten H.A.B."/>
            <person name="Zeng A.-P."/>
            <person name="van Ooyen A.J.J."/>
            <person name="Visser J."/>
            <person name="Stam H."/>
        </authorList>
    </citation>
    <scope>NUCLEOTIDE SEQUENCE [LARGE SCALE GENOMIC DNA]</scope>
    <source>
        <strain>ATCC MYA-4892 / CBS 513.88 / FGSC A1513</strain>
    </source>
</reference>
<protein>
    <recommendedName>
        <fullName evidence="1">Methionine aminopeptidase 2-2</fullName>
        <shortName evidence="1">MAP 2-2</shortName>
        <shortName evidence="1">MetAP 2-2</shortName>
        <ecNumber evidence="1">3.4.11.18</ecNumber>
    </recommendedName>
    <alternativeName>
        <fullName evidence="1">Peptidase M</fullName>
    </alternativeName>
</protein>
<dbReference type="EC" id="3.4.11.18" evidence="1"/>
<dbReference type="EMBL" id="AM270069">
    <property type="protein sequence ID" value="CAK38590.1"/>
    <property type="molecule type" value="Genomic_DNA"/>
</dbReference>
<dbReference type="SMR" id="A2QHX0"/>
<dbReference type="MEROPS" id="M24.002"/>
<dbReference type="EnsemblFungi" id="CAK38590">
    <property type="protein sequence ID" value="CAK38590"/>
    <property type="gene ID" value="An04g01330"/>
</dbReference>
<dbReference type="HOGENOM" id="CLU_015857_7_1_1"/>
<dbReference type="Proteomes" id="UP000006706">
    <property type="component" value="Chromosome 6L"/>
</dbReference>
<dbReference type="GO" id="GO:0005737">
    <property type="term" value="C:cytoplasm"/>
    <property type="evidence" value="ECO:0007669"/>
    <property type="project" value="UniProtKB-SubCell"/>
</dbReference>
<dbReference type="GO" id="GO:0004239">
    <property type="term" value="F:initiator methionyl aminopeptidase activity"/>
    <property type="evidence" value="ECO:0007669"/>
    <property type="project" value="UniProtKB-UniRule"/>
</dbReference>
<dbReference type="GO" id="GO:0046872">
    <property type="term" value="F:metal ion binding"/>
    <property type="evidence" value="ECO:0007669"/>
    <property type="project" value="UniProtKB-UniRule"/>
</dbReference>
<dbReference type="GO" id="GO:0070006">
    <property type="term" value="F:metalloaminopeptidase activity"/>
    <property type="evidence" value="ECO:0007669"/>
    <property type="project" value="UniProtKB-UniRule"/>
</dbReference>
<dbReference type="GO" id="GO:0006508">
    <property type="term" value="P:proteolysis"/>
    <property type="evidence" value="ECO:0007669"/>
    <property type="project" value="UniProtKB-KW"/>
</dbReference>
<dbReference type="CDD" id="cd01088">
    <property type="entry name" value="MetAP2"/>
    <property type="match status" value="1"/>
</dbReference>
<dbReference type="FunFam" id="1.10.10.10:FF:000370">
    <property type="entry name" value="Methionine aminopeptidase 2"/>
    <property type="match status" value="1"/>
</dbReference>
<dbReference type="Gene3D" id="3.90.230.10">
    <property type="entry name" value="Creatinase/methionine aminopeptidase superfamily"/>
    <property type="match status" value="1"/>
</dbReference>
<dbReference type="Gene3D" id="1.10.10.10">
    <property type="entry name" value="Winged helix-like DNA-binding domain superfamily/Winged helix DNA-binding domain"/>
    <property type="match status" value="1"/>
</dbReference>
<dbReference type="HAMAP" id="MF_03175">
    <property type="entry name" value="MetAP_2_euk"/>
    <property type="match status" value="1"/>
</dbReference>
<dbReference type="InterPro" id="IPR036005">
    <property type="entry name" value="Creatinase/aminopeptidase-like"/>
</dbReference>
<dbReference type="InterPro" id="IPR050247">
    <property type="entry name" value="Met_Aminopeptidase_Type2"/>
</dbReference>
<dbReference type="InterPro" id="IPR000994">
    <property type="entry name" value="Pept_M24"/>
</dbReference>
<dbReference type="InterPro" id="IPR001714">
    <property type="entry name" value="Pept_M24_MAP"/>
</dbReference>
<dbReference type="InterPro" id="IPR002468">
    <property type="entry name" value="Pept_M24A_MAP2"/>
</dbReference>
<dbReference type="InterPro" id="IPR018349">
    <property type="entry name" value="Pept_M24A_MAP2_BS"/>
</dbReference>
<dbReference type="InterPro" id="IPR036388">
    <property type="entry name" value="WH-like_DNA-bd_sf"/>
</dbReference>
<dbReference type="InterPro" id="IPR036390">
    <property type="entry name" value="WH_DNA-bd_sf"/>
</dbReference>
<dbReference type="NCBIfam" id="TIGR00501">
    <property type="entry name" value="met_pdase_II"/>
    <property type="match status" value="1"/>
</dbReference>
<dbReference type="PANTHER" id="PTHR45777">
    <property type="entry name" value="METHIONINE AMINOPEPTIDASE 2"/>
    <property type="match status" value="1"/>
</dbReference>
<dbReference type="PANTHER" id="PTHR45777:SF2">
    <property type="entry name" value="METHIONINE AMINOPEPTIDASE 2"/>
    <property type="match status" value="1"/>
</dbReference>
<dbReference type="Pfam" id="PF00557">
    <property type="entry name" value="Peptidase_M24"/>
    <property type="match status" value="1"/>
</dbReference>
<dbReference type="PRINTS" id="PR00599">
    <property type="entry name" value="MAPEPTIDASE"/>
</dbReference>
<dbReference type="SUPFAM" id="SSF55920">
    <property type="entry name" value="Creatinase/aminopeptidase"/>
    <property type="match status" value="1"/>
</dbReference>
<dbReference type="SUPFAM" id="SSF46785">
    <property type="entry name" value="Winged helix' DNA-binding domain"/>
    <property type="match status" value="1"/>
</dbReference>
<dbReference type="PROSITE" id="PS01202">
    <property type="entry name" value="MAP_2"/>
    <property type="match status" value="1"/>
</dbReference>
<keyword id="KW-0031">Aminopeptidase</keyword>
<keyword id="KW-0963">Cytoplasm</keyword>
<keyword id="KW-0378">Hydrolase</keyword>
<keyword id="KW-0479">Metal-binding</keyword>
<keyword id="KW-0645">Protease</keyword>
<keyword id="KW-1185">Reference proteome</keyword>
<organism>
    <name type="scientific">Aspergillus niger (strain ATCC MYA-4892 / CBS 513.88 / FGSC A1513)</name>
    <dbReference type="NCBI Taxonomy" id="425011"/>
    <lineage>
        <taxon>Eukaryota</taxon>
        <taxon>Fungi</taxon>
        <taxon>Dikarya</taxon>
        <taxon>Ascomycota</taxon>
        <taxon>Pezizomycotina</taxon>
        <taxon>Eurotiomycetes</taxon>
        <taxon>Eurotiomycetidae</taxon>
        <taxon>Eurotiales</taxon>
        <taxon>Aspergillaceae</taxon>
        <taxon>Aspergillus</taxon>
        <taxon>Aspergillus subgen. Circumdati</taxon>
    </lineage>
</organism>
<name>MAP22_ASPNC</name>
<accession>A2QHX0</accession>